<proteinExistence type="inferred from homology"/>
<reference key="1">
    <citation type="journal article" date="2004" name="Nat. Biotechnol.">
        <title>Complete genome sequence of the metabolically versatile photosynthetic bacterium Rhodopseudomonas palustris.</title>
        <authorList>
            <person name="Larimer F.W."/>
            <person name="Chain P."/>
            <person name="Hauser L."/>
            <person name="Lamerdin J.E."/>
            <person name="Malfatti S."/>
            <person name="Do L."/>
            <person name="Land M.L."/>
            <person name="Pelletier D.A."/>
            <person name="Beatty J.T."/>
            <person name="Lang A.S."/>
            <person name="Tabita F.R."/>
            <person name="Gibson J.L."/>
            <person name="Hanson T.E."/>
            <person name="Bobst C."/>
            <person name="Torres y Torres J.L."/>
            <person name="Peres C."/>
            <person name="Harrison F.H."/>
            <person name="Gibson J."/>
            <person name="Harwood C.S."/>
        </authorList>
    </citation>
    <scope>NUCLEOTIDE SEQUENCE [LARGE SCALE GENOMIC DNA]</scope>
    <source>
        <strain>ATCC BAA-98 / CGA009</strain>
    </source>
</reference>
<evidence type="ECO:0000255" key="1">
    <source>
        <dbReference type="HAMAP-Rule" id="MF_01338"/>
    </source>
</evidence>
<feature type="chain" id="PRO_0000062646" description="Ribulose bisphosphate carboxylase large chain">
    <location>
        <begin position="1"/>
        <end position="485"/>
    </location>
</feature>
<feature type="active site" description="Proton acceptor" evidence="1">
    <location>
        <position position="176"/>
    </location>
</feature>
<feature type="active site" description="Proton acceptor" evidence="1">
    <location>
        <position position="294"/>
    </location>
</feature>
<feature type="binding site" description="in homodimeric partner" evidence="1">
    <location>
        <position position="124"/>
    </location>
    <ligand>
        <name>substrate</name>
    </ligand>
</feature>
<feature type="binding site" evidence="1">
    <location>
        <position position="174"/>
    </location>
    <ligand>
        <name>substrate</name>
    </ligand>
</feature>
<feature type="binding site" evidence="1">
    <location>
        <position position="178"/>
    </location>
    <ligand>
        <name>substrate</name>
    </ligand>
</feature>
<feature type="binding site" description="via carbamate group" evidence="1">
    <location>
        <position position="202"/>
    </location>
    <ligand>
        <name>Mg(2+)</name>
        <dbReference type="ChEBI" id="CHEBI:18420"/>
    </ligand>
</feature>
<feature type="binding site" evidence="1">
    <location>
        <position position="204"/>
    </location>
    <ligand>
        <name>Mg(2+)</name>
        <dbReference type="ChEBI" id="CHEBI:18420"/>
    </ligand>
</feature>
<feature type="binding site" evidence="1">
    <location>
        <position position="205"/>
    </location>
    <ligand>
        <name>Mg(2+)</name>
        <dbReference type="ChEBI" id="CHEBI:18420"/>
    </ligand>
</feature>
<feature type="binding site" evidence="1">
    <location>
        <position position="295"/>
    </location>
    <ligand>
        <name>substrate</name>
    </ligand>
</feature>
<feature type="binding site" evidence="1">
    <location>
        <position position="327"/>
    </location>
    <ligand>
        <name>substrate</name>
    </ligand>
</feature>
<feature type="binding site" evidence="1">
    <location>
        <position position="379"/>
    </location>
    <ligand>
        <name>substrate</name>
    </ligand>
</feature>
<feature type="site" description="Transition state stabilizer" evidence="1">
    <location>
        <position position="334"/>
    </location>
</feature>
<feature type="modified residue" description="N6-carboxylysine" evidence="1">
    <location>
        <position position="202"/>
    </location>
</feature>
<keyword id="KW-0113">Calvin cycle</keyword>
<keyword id="KW-0120">Carbon dioxide fixation</keyword>
<keyword id="KW-0456">Lyase</keyword>
<keyword id="KW-0460">Magnesium</keyword>
<keyword id="KW-0479">Metal-binding</keyword>
<keyword id="KW-0503">Monooxygenase</keyword>
<keyword id="KW-0560">Oxidoreductase</keyword>
<keyword id="KW-0602">Photosynthesis</keyword>
<protein>
    <recommendedName>
        <fullName evidence="1">Ribulose bisphosphate carboxylase large chain</fullName>
        <shortName evidence="1">RuBisCO large subunit</shortName>
        <ecNumber evidence="1">4.1.1.39</ecNumber>
    </recommendedName>
</protein>
<organism>
    <name type="scientific">Rhodopseudomonas palustris (strain ATCC BAA-98 / CGA009)</name>
    <dbReference type="NCBI Taxonomy" id="258594"/>
    <lineage>
        <taxon>Bacteria</taxon>
        <taxon>Pseudomonadati</taxon>
        <taxon>Pseudomonadota</taxon>
        <taxon>Alphaproteobacteria</taxon>
        <taxon>Hyphomicrobiales</taxon>
        <taxon>Nitrobacteraceae</taxon>
        <taxon>Rhodopseudomonas</taxon>
    </lineage>
</organism>
<sequence length="485" mass="53914">MNEAVTIRGKERYKSGVMEYKKMGYWEPDYEPKDTDVIALFRVTPQDGVDPIEAAAAVAGESSTATWTVVWTDRLTAAEKYRAKCYRVDPVPNSLGQYFAYIAYDLDLFEPGSISNLTASIIGNVFGFKPLKALRLEDMRLPIAYVKTFQGPATGIVVERERMDKFGRPLLGATVKPKLGLSGRNYGRVVYEALKGGLDFTKDDENINSQPFMHWRERFQYCMEAVNKAQAQTGEIKGTYLNVTAATMEDMYERAEYAKELGSIIVMIDLVIGYTAIQSMAKWARKNDMILHLHRAGHSTYTRQRNHGVSFRVIAKWMRLAGVDHIHAGTVVGKLEGDPATTKGYYDICREDFNPMTLENGLFFDQHWASLNKLMPVASGGIHAGQMHQLLHLLGEDVVLQFGGGTIGHPMGIAAGATANRVALEAMILARNEGRDYLHEGPEILAKAAQTCTPLKAALDTWKNVTFNYESTDTPDYAPTPSVSV</sequence>
<name>RBL1_RHOPA</name>
<comment type="function">
    <text evidence="1">RuBisCO catalyzes two reactions: the carboxylation of D-ribulose 1,5-bisphosphate, the primary event in carbon dioxide fixation, as well as the oxidative fragmentation of the pentose substrate. Both reactions occur simultaneously and in competition at the same active site.</text>
</comment>
<comment type="catalytic activity">
    <reaction evidence="1">
        <text>2 (2R)-3-phosphoglycerate + 2 H(+) = D-ribulose 1,5-bisphosphate + CO2 + H2O</text>
        <dbReference type="Rhea" id="RHEA:23124"/>
        <dbReference type="ChEBI" id="CHEBI:15377"/>
        <dbReference type="ChEBI" id="CHEBI:15378"/>
        <dbReference type="ChEBI" id="CHEBI:16526"/>
        <dbReference type="ChEBI" id="CHEBI:57870"/>
        <dbReference type="ChEBI" id="CHEBI:58272"/>
        <dbReference type="EC" id="4.1.1.39"/>
    </reaction>
</comment>
<comment type="catalytic activity">
    <reaction evidence="1">
        <text>D-ribulose 1,5-bisphosphate + O2 = 2-phosphoglycolate + (2R)-3-phosphoglycerate + 2 H(+)</text>
        <dbReference type="Rhea" id="RHEA:36631"/>
        <dbReference type="ChEBI" id="CHEBI:15378"/>
        <dbReference type="ChEBI" id="CHEBI:15379"/>
        <dbReference type="ChEBI" id="CHEBI:57870"/>
        <dbReference type="ChEBI" id="CHEBI:58033"/>
        <dbReference type="ChEBI" id="CHEBI:58272"/>
    </reaction>
</comment>
<comment type="cofactor">
    <cofactor evidence="1">
        <name>Mg(2+)</name>
        <dbReference type="ChEBI" id="CHEBI:18420"/>
    </cofactor>
    <text evidence="1">Binds 1 Mg(2+) ion per subunit.</text>
</comment>
<comment type="subunit">
    <text evidence="1">Heterohexadecamer of 8 large chains and 8 small chains.</text>
</comment>
<comment type="miscellaneous">
    <text evidence="1">The basic functional RuBisCO is composed of a large chain homodimer in a 'head-to-tail' conformation. In form I RuBisCO this homodimer is arranged in a barrel-like tetramer with the small subunits forming a tetrameric 'cap' on each end of the 'barrel'.</text>
</comment>
<comment type="similarity">
    <text evidence="1">Belongs to the RuBisCO large chain family. Type I subfamily.</text>
</comment>
<dbReference type="EC" id="4.1.1.39" evidence="1"/>
<dbReference type="EMBL" id="BX572597">
    <property type="protein sequence ID" value="CAE27000.1"/>
    <property type="molecule type" value="Genomic_DNA"/>
</dbReference>
<dbReference type="RefSeq" id="WP_011157118.1">
    <property type="nucleotide sequence ID" value="NZ_CP116810.1"/>
</dbReference>
<dbReference type="SMR" id="Q6N9J0"/>
<dbReference type="STRING" id="258594.RPA1559"/>
<dbReference type="GeneID" id="66892589"/>
<dbReference type="eggNOG" id="COG1850">
    <property type="taxonomic scope" value="Bacteria"/>
</dbReference>
<dbReference type="HOGENOM" id="CLU_031450_2_0_5"/>
<dbReference type="PhylomeDB" id="Q6N9J0"/>
<dbReference type="GO" id="GO:0000287">
    <property type="term" value="F:magnesium ion binding"/>
    <property type="evidence" value="ECO:0007669"/>
    <property type="project" value="UniProtKB-UniRule"/>
</dbReference>
<dbReference type="GO" id="GO:0004497">
    <property type="term" value="F:monooxygenase activity"/>
    <property type="evidence" value="ECO:0007669"/>
    <property type="project" value="UniProtKB-KW"/>
</dbReference>
<dbReference type="GO" id="GO:0016984">
    <property type="term" value="F:ribulose-bisphosphate carboxylase activity"/>
    <property type="evidence" value="ECO:0007669"/>
    <property type="project" value="UniProtKB-UniRule"/>
</dbReference>
<dbReference type="GO" id="GO:0019253">
    <property type="term" value="P:reductive pentose-phosphate cycle"/>
    <property type="evidence" value="ECO:0007669"/>
    <property type="project" value="UniProtKB-UniRule"/>
</dbReference>
<dbReference type="CDD" id="cd08212">
    <property type="entry name" value="RuBisCO_large_I"/>
    <property type="match status" value="1"/>
</dbReference>
<dbReference type="Gene3D" id="3.20.20.110">
    <property type="entry name" value="Ribulose bisphosphate carboxylase, large subunit, C-terminal domain"/>
    <property type="match status" value="1"/>
</dbReference>
<dbReference type="Gene3D" id="3.30.70.150">
    <property type="entry name" value="RuBisCO large subunit, N-terminal domain"/>
    <property type="match status" value="1"/>
</dbReference>
<dbReference type="HAMAP" id="MF_01338">
    <property type="entry name" value="RuBisCO_L_type1"/>
    <property type="match status" value="1"/>
</dbReference>
<dbReference type="InterPro" id="IPR033966">
    <property type="entry name" value="RuBisCO"/>
</dbReference>
<dbReference type="InterPro" id="IPR020878">
    <property type="entry name" value="RuBisCo_large_chain_AS"/>
</dbReference>
<dbReference type="InterPro" id="IPR000685">
    <property type="entry name" value="RuBisCO_lsu_C"/>
</dbReference>
<dbReference type="InterPro" id="IPR036376">
    <property type="entry name" value="RuBisCO_lsu_C_sf"/>
</dbReference>
<dbReference type="InterPro" id="IPR017443">
    <property type="entry name" value="RuBisCO_lsu_fd_N"/>
</dbReference>
<dbReference type="InterPro" id="IPR036422">
    <property type="entry name" value="RuBisCO_lsu_N_sf"/>
</dbReference>
<dbReference type="InterPro" id="IPR020888">
    <property type="entry name" value="RuBisCO_lsuI"/>
</dbReference>
<dbReference type="NCBIfam" id="NF003252">
    <property type="entry name" value="PRK04208.1"/>
    <property type="match status" value="1"/>
</dbReference>
<dbReference type="PANTHER" id="PTHR42704">
    <property type="entry name" value="RIBULOSE BISPHOSPHATE CARBOXYLASE"/>
    <property type="match status" value="1"/>
</dbReference>
<dbReference type="PANTHER" id="PTHR42704:SF17">
    <property type="entry name" value="RIBULOSE BISPHOSPHATE CARBOXYLASE LARGE CHAIN"/>
    <property type="match status" value="1"/>
</dbReference>
<dbReference type="Pfam" id="PF00016">
    <property type="entry name" value="RuBisCO_large"/>
    <property type="match status" value="1"/>
</dbReference>
<dbReference type="Pfam" id="PF02788">
    <property type="entry name" value="RuBisCO_large_N"/>
    <property type="match status" value="1"/>
</dbReference>
<dbReference type="SFLD" id="SFLDG01052">
    <property type="entry name" value="RuBisCO"/>
    <property type="match status" value="1"/>
</dbReference>
<dbReference type="SFLD" id="SFLDS00014">
    <property type="entry name" value="RuBisCO"/>
    <property type="match status" value="1"/>
</dbReference>
<dbReference type="SFLD" id="SFLDG00301">
    <property type="entry name" value="RuBisCO-like_proteins"/>
    <property type="match status" value="1"/>
</dbReference>
<dbReference type="SUPFAM" id="SSF51649">
    <property type="entry name" value="RuBisCo, C-terminal domain"/>
    <property type="match status" value="1"/>
</dbReference>
<dbReference type="SUPFAM" id="SSF54966">
    <property type="entry name" value="RuBisCO, large subunit, small (N-terminal) domain"/>
    <property type="match status" value="1"/>
</dbReference>
<dbReference type="PROSITE" id="PS00157">
    <property type="entry name" value="RUBISCO_LARGE"/>
    <property type="match status" value="1"/>
</dbReference>
<accession>Q6N9J0</accession>
<gene>
    <name evidence="1" type="primary">cbbL</name>
    <name type="ordered locus">RPA1559</name>
</gene>